<evidence type="ECO:0000255" key="1">
    <source>
        <dbReference type="HAMAP-Rule" id="MF_01339"/>
    </source>
</evidence>
<accession>Q21YM9</accession>
<sequence>MDQSKRYADLSLQEAALIAGGQHILCAYKMAPKDGLNYLEAAAHFAAESSTGTNVEVCTTDDFTRDVDALVYYVNEATEDMRIAYPLALFDRNITDGRFMLVSFLTLAVGNNQGMGDIKHAKMIDFYVPERVIQMFDGPAKDISDLWRILGRPVKDGGFIVGTIIKPKLGLRPEPFAQAAYQFWLGGDFIKNDEPQGNQVFSPIKKTLPLVYDALKRAQDETGQAKLFSMNITADDHFEMCARADFALETFGADADKLAFLVDGFVGGPGMVTTARRQYPNQYLHYHRGGHGMVTSPSSKRGYTALVLAKMSRLQGASGIHVGTMGHGKMEGAGDDRVMAYMIERDECQGPVYFQKWYGIKPTTPIVSGGMNALRLPGFFDNLGHGNIINTAGGGSYGHLDSPAAGAVSLRQAYECWKAGADPIEWAKEHREFARAFESFPQDADRLFAGWRDKLGVGA</sequence>
<keyword id="KW-0113">Calvin cycle</keyword>
<keyword id="KW-0120">Carbon dioxide fixation</keyword>
<keyword id="KW-0456">Lyase</keyword>
<keyword id="KW-0460">Magnesium</keyword>
<keyword id="KW-0479">Metal-binding</keyword>
<keyword id="KW-0503">Monooxygenase</keyword>
<keyword id="KW-0560">Oxidoreductase</keyword>
<keyword id="KW-1185">Reference proteome</keyword>
<gene>
    <name evidence="1" type="primary">cbbM</name>
    <name type="ordered locus">Rfer_1391</name>
</gene>
<comment type="function">
    <text evidence="1">RuBisCO catalyzes two reactions: the carboxylation of D-ribulose 1,5-bisphosphate, the primary event in carbon dioxide fixation, as well as the oxidative fragmentation of the pentose substrate. Both reactions occur simultaneously and in competition at the same active site.</text>
</comment>
<comment type="catalytic activity">
    <reaction evidence="1">
        <text>2 (2R)-3-phosphoglycerate + 2 H(+) = D-ribulose 1,5-bisphosphate + CO2 + H2O</text>
        <dbReference type="Rhea" id="RHEA:23124"/>
        <dbReference type="ChEBI" id="CHEBI:15377"/>
        <dbReference type="ChEBI" id="CHEBI:15378"/>
        <dbReference type="ChEBI" id="CHEBI:16526"/>
        <dbReference type="ChEBI" id="CHEBI:57870"/>
        <dbReference type="ChEBI" id="CHEBI:58272"/>
        <dbReference type="EC" id="4.1.1.39"/>
    </reaction>
</comment>
<comment type="catalytic activity">
    <reaction evidence="1">
        <text>D-ribulose 1,5-bisphosphate + O2 = 2-phosphoglycolate + (2R)-3-phosphoglycerate + 2 H(+)</text>
        <dbReference type="Rhea" id="RHEA:36631"/>
        <dbReference type="ChEBI" id="CHEBI:15378"/>
        <dbReference type="ChEBI" id="CHEBI:15379"/>
        <dbReference type="ChEBI" id="CHEBI:57870"/>
        <dbReference type="ChEBI" id="CHEBI:58033"/>
        <dbReference type="ChEBI" id="CHEBI:58272"/>
    </reaction>
</comment>
<comment type="cofactor">
    <cofactor evidence="1">
        <name>Mg(2+)</name>
        <dbReference type="ChEBI" id="CHEBI:18420"/>
    </cofactor>
    <text evidence="1">Binds 1 Mg(2+) ion per subunit.</text>
</comment>
<comment type="subunit">
    <text evidence="1">Homodimer.</text>
</comment>
<comment type="miscellaneous">
    <text evidence="1">The basic functional RuBisCO is composed of a large chain homodimer in a 'head-to-tail' conformation. In contrast to form I RuBisCO, the form II RuBisCO are composed solely of large subunits.</text>
</comment>
<comment type="similarity">
    <text evidence="1">Belongs to the RuBisCO large chain family. Type II subfamily.</text>
</comment>
<proteinExistence type="inferred from homology"/>
<feature type="chain" id="PRO_0000251408" description="Ribulose bisphosphate carboxylase">
    <location>
        <begin position="1"/>
        <end position="459"/>
    </location>
</feature>
<feature type="active site" description="Proton acceptor" evidence="1">
    <location>
        <position position="166"/>
    </location>
</feature>
<feature type="active site" description="Proton acceptor" evidence="1">
    <location>
        <position position="287"/>
    </location>
</feature>
<feature type="binding site" description="in homodimeric partner" evidence="1">
    <location>
        <position position="111"/>
    </location>
    <ligand>
        <name>substrate</name>
    </ligand>
</feature>
<feature type="binding site" evidence="1">
    <location>
        <position position="168"/>
    </location>
    <ligand>
        <name>substrate</name>
    </ligand>
</feature>
<feature type="binding site" description="via carbamate group" evidence="1">
    <location>
        <position position="191"/>
    </location>
    <ligand>
        <name>Mg(2+)</name>
        <dbReference type="ChEBI" id="CHEBI:18420"/>
    </ligand>
</feature>
<feature type="binding site" evidence="1">
    <location>
        <position position="193"/>
    </location>
    <ligand>
        <name>Mg(2+)</name>
        <dbReference type="ChEBI" id="CHEBI:18420"/>
    </ligand>
</feature>
<feature type="binding site" evidence="1">
    <location>
        <position position="194"/>
    </location>
    <ligand>
        <name>Mg(2+)</name>
        <dbReference type="ChEBI" id="CHEBI:18420"/>
    </ligand>
</feature>
<feature type="binding site" evidence="1">
    <location>
        <position position="288"/>
    </location>
    <ligand>
        <name>substrate</name>
    </ligand>
</feature>
<feature type="binding site" evidence="1">
    <location>
        <position position="321"/>
    </location>
    <ligand>
        <name>substrate</name>
    </ligand>
</feature>
<feature type="binding site" evidence="1">
    <location>
        <position position="368"/>
    </location>
    <ligand>
        <name>substrate</name>
    </ligand>
</feature>
<feature type="site" description="Transition state stabilizer" evidence="1">
    <location>
        <position position="329"/>
    </location>
</feature>
<feature type="modified residue" description="N6-carboxylysine" evidence="1">
    <location>
        <position position="191"/>
    </location>
</feature>
<reference key="1">
    <citation type="submission" date="2006-02" db="EMBL/GenBank/DDBJ databases">
        <title>Complete sequence of chromosome of Rhodoferax ferrireducens DSM 15236.</title>
        <authorList>
            <person name="Copeland A."/>
            <person name="Lucas S."/>
            <person name="Lapidus A."/>
            <person name="Barry K."/>
            <person name="Detter J.C."/>
            <person name="Glavina del Rio T."/>
            <person name="Hammon N."/>
            <person name="Israni S."/>
            <person name="Pitluck S."/>
            <person name="Brettin T."/>
            <person name="Bruce D."/>
            <person name="Han C."/>
            <person name="Tapia R."/>
            <person name="Gilna P."/>
            <person name="Kiss H."/>
            <person name="Schmutz J."/>
            <person name="Larimer F."/>
            <person name="Land M."/>
            <person name="Kyrpides N."/>
            <person name="Ivanova N."/>
            <person name="Richardson P."/>
        </authorList>
    </citation>
    <scope>NUCLEOTIDE SEQUENCE [LARGE SCALE GENOMIC DNA]</scope>
    <source>
        <strain>ATCC BAA-621 / DSM 15236 / T118</strain>
    </source>
</reference>
<name>RBL2_ALBFT</name>
<dbReference type="EC" id="4.1.1.39" evidence="1"/>
<dbReference type="EMBL" id="CP000267">
    <property type="protein sequence ID" value="ABD69124.1"/>
    <property type="molecule type" value="Genomic_DNA"/>
</dbReference>
<dbReference type="RefSeq" id="WP_011463692.1">
    <property type="nucleotide sequence ID" value="NC_007908.1"/>
</dbReference>
<dbReference type="SMR" id="Q21YM9"/>
<dbReference type="STRING" id="338969.Rfer_1391"/>
<dbReference type="KEGG" id="rfr:Rfer_1391"/>
<dbReference type="eggNOG" id="COG1850">
    <property type="taxonomic scope" value="Bacteria"/>
</dbReference>
<dbReference type="HOGENOM" id="CLU_031450_3_1_4"/>
<dbReference type="OrthoDB" id="9770811at2"/>
<dbReference type="Proteomes" id="UP000008332">
    <property type="component" value="Chromosome"/>
</dbReference>
<dbReference type="GO" id="GO:0000287">
    <property type="term" value="F:magnesium ion binding"/>
    <property type="evidence" value="ECO:0007669"/>
    <property type="project" value="UniProtKB-UniRule"/>
</dbReference>
<dbReference type="GO" id="GO:0004497">
    <property type="term" value="F:monooxygenase activity"/>
    <property type="evidence" value="ECO:0007669"/>
    <property type="project" value="UniProtKB-KW"/>
</dbReference>
<dbReference type="GO" id="GO:0016984">
    <property type="term" value="F:ribulose-bisphosphate carboxylase activity"/>
    <property type="evidence" value="ECO:0007669"/>
    <property type="project" value="UniProtKB-UniRule"/>
</dbReference>
<dbReference type="GO" id="GO:0019253">
    <property type="term" value="P:reductive pentose-phosphate cycle"/>
    <property type="evidence" value="ECO:0007669"/>
    <property type="project" value="UniProtKB-KW"/>
</dbReference>
<dbReference type="CDD" id="cd08211">
    <property type="entry name" value="RuBisCO_large_II"/>
    <property type="match status" value="1"/>
</dbReference>
<dbReference type="Gene3D" id="3.20.20.110">
    <property type="entry name" value="Ribulose bisphosphate carboxylase, large subunit, C-terminal domain"/>
    <property type="match status" value="1"/>
</dbReference>
<dbReference type="Gene3D" id="3.30.70.150">
    <property type="entry name" value="RuBisCO large subunit, N-terminal domain"/>
    <property type="match status" value="1"/>
</dbReference>
<dbReference type="HAMAP" id="MF_01339">
    <property type="entry name" value="RuBisCO_L_type2"/>
    <property type="match status" value="1"/>
</dbReference>
<dbReference type="InterPro" id="IPR033966">
    <property type="entry name" value="RuBisCO"/>
</dbReference>
<dbReference type="InterPro" id="IPR020878">
    <property type="entry name" value="RuBisCo_large_chain_AS"/>
</dbReference>
<dbReference type="InterPro" id="IPR000685">
    <property type="entry name" value="RuBisCO_lsu_C"/>
</dbReference>
<dbReference type="InterPro" id="IPR036376">
    <property type="entry name" value="RuBisCO_lsu_C_sf"/>
</dbReference>
<dbReference type="InterPro" id="IPR017443">
    <property type="entry name" value="RuBisCO_lsu_fd_N"/>
</dbReference>
<dbReference type="InterPro" id="IPR036422">
    <property type="entry name" value="RuBisCO_lsu_N_sf"/>
</dbReference>
<dbReference type="InterPro" id="IPR020871">
    <property type="entry name" value="RuBisCO_lsuII"/>
</dbReference>
<dbReference type="NCBIfam" id="NF010002">
    <property type="entry name" value="PRK13475.1"/>
    <property type="match status" value="1"/>
</dbReference>
<dbReference type="PANTHER" id="PTHR42704">
    <property type="entry name" value="RIBULOSE BISPHOSPHATE CARBOXYLASE"/>
    <property type="match status" value="1"/>
</dbReference>
<dbReference type="PANTHER" id="PTHR42704:SF17">
    <property type="entry name" value="RIBULOSE BISPHOSPHATE CARBOXYLASE LARGE CHAIN"/>
    <property type="match status" value="1"/>
</dbReference>
<dbReference type="Pfam" id="PF00016">
    <property type="entry name" value="RuBisCO_large"/>
    <property type="match status" value="1"/>
</dbReference>
<dbReference type="Pfam" id="PF02788">
    <property type="entry name" value="RuBisCO_large_N"/>
    <property type="match status" value="1"/>
</dbReference>
<dbReference type="SUPFAM" id="SSF51649">
    <property type="entry name" value="RuBisCo, C-terminal domain"/>
    <property type="match status" value="1"/>
</dbReference>
<dbReference type="SUPFAM" id="SSF54966">
    <property type="entry name" value="RuBisCO, large subunit, small (N-terminal) domain"/>
    <property type="match status" value="1"/>
</dbReference>
<dbReference type="PROSITE" id="PS00157">
    <property type="entry name" value="RUBISCO_LARGE"/>
    <property type="match status" value="1"/>
</dbReference>
<protein>
    <recommendedName>
        <fullName evidence="1">Ribulose bisphosphate carboxylase</fullName>
        <shortName evidence="1">RuBisCO</shortName>
        <ecNumber evidence="1">4.1.1.39</ecNumber>
    </recommendedName>
</protein>
<organism>
    <name type="scientific">Albidiferax ferrireducens (strain ATCC BAA-621 / DSM 15236 / T118)</name>
    <name type="common">Rhodoferax ferrireducens</name>
    <dbReference type="NCBI Taxonomy" id="338969"/>
    <lineage>
        <taxon>Bacteria</taxon>
        <taxon>Pseudomonadati</taxon>
        <taxon>Pseudomonadota</taxon>
        <taxon>Betaproteobacteria</taxon>
        <taxon>Burkholderiales</taxon>
        <taxon>Comamonadaceae</taxon>
        <taxon>Rhodoferax</taxon>
    </lineage>
</organism>